<name>YJBI_ECOLI</name>
<organism>
    <name type="scientific">Escherichia coli (strain K12)</name>
    <dbReference type="NCBI Taxonomy" id="83333"/>
    <lineage>
        <taxon>Bacteria</taxon>
        <taxon>Pseudomonadati</taxon>
        <taxon>Pseudomonadota</taxon>
        <taxon>Gammaproteobacteria</taxon>
        <taxon>Enterobacterales</taxon>
        <taxon>Enterobacteriaceae</taxon>
        <taxon>Escherichia</taxon>
    </lineage>
</organism>
<reference key="1">
    <citation type="journal article" date="1993" name="Nucleic Acids Res.">
        <title>Analysis of the Escherichia coli genome. IV. DNA sequence of the region from 89.2 to 92.8 minutes.</title>
        <authorList>
            <person name="Blattner F.R."/>
            <person name="Burland V.D."/>
            <person name="Plunkett G. III"/>
            <person name="Sofia H.J."/>
            <person name="Daniels D.L."/>
        </authorList>
    </citation>
    <scope>NUCLEOTIDE SEQUENCE [LARGE SCALE GENOMIC DNA]</scope>
    <source>
        <strain>K12 / MG1655 / ATCC 47076</strain>
    </source>
</reference>
<reference key="2">
    <citation type="journal article" date="1997" name="Science">
        <title>The complete genome sequence of Escherichia coli K-12.</title>
        <authorList>
            <person name="Blattner F.R."/>
            <person name="Plunkett G. III"/>
            <person name="Bloch C.A."/>
            <person name="Perna N.T."/>
            <person name="Burland V."/>
            <person name="Riley M."/>
            <person name="Collado-Vides J."/>
            <person name="Glasner J.D."/>
            <person name="Rode C.K."/>
            <person name="Mayhew G.F."/>
            <person name="Gregor J."/>
            <person name="Davis N.W."/>
            <person name="Kirkpatrick H.A."/>
            <person name="Goeden M.A."/>
            <person name="Rose D.J."/>
            <person name="Mau B."/>
            <person name="Shao Y."/>
        </authorList>
    </citation>
    <scope>NUCLEOTIDE SEQUENCE [LARGE SCALE GENOMIC DNA]</scope>
    <source>
        <strain>K12 / MG1655 / ATCC 47076</strain>
    </source>
</reference>
<reference key="3">
    <citation type="journal article" date="2006" name="Mol. Syst. Biol.">
        <title>Highly accurate genome sequences of Escherichia coli K-12 strains MG1655 and W3110.</title>
        <authorList>
            <person name="Hayashi K."/>
            <person name="Morooka N."/>
            <person name="Yamamoto Y."/>
            <person name="Fujita K."/>
            <person name="Isono K."/>
            <person name="Choi S."/>
            <person name="Ohtsubo E."/>
            <person name="Baba T."/>
            <person name="Wanner B.L."/>
            <person name="Mori H."/>
            <person name="Horiuchi T."/>
        </authorList>
    </citation>
    <scope>NUCLEOTIDE SEQUENCE [LARGE SCALE GENOMIC DNA]</scope>
    <source>
        <strain>K12 / W3110 / ATCC 27325 / DSM 5911</strain>
    </source>
</reference>
<reference key="4">
    <citation type="journal article" date="1993" name="J. Gen. Microbiol.">
        <title>Mutants of Escherichia coli affected in respiration: the cloning and nucleotide sequence of ubiA, encoding the membrane-bound p-hydroxybenzoate:octaprenyltransferase.</title>
        <authorList>
            <person name="Wu G."/>
            <person name="Williams H.D."/>
            <person name="Gibson F."/>
            <person name="Poole R.K."/>
        </authorList>
    </citation>
    <scope>NUCLEOTIDE SEQUENCE [GENOMIC DNA] OF 270-442</scope>
    <source>
        <strain>K12</strain>
    </source>
</reference>
<reference key="5">
    <citation type="journal article" date="1997" name="Genetics">
        <title>Isolation and characterization of suppressors of two Escherichia coli dnaG mutations, dnaG2903 and parB.</title>
        <authorList>
            <person name="Britton R.A."/>
            <person name="Lupski J.R."/>
        </authorList>
    </citation>
    <scope>POSSIBLE GENETIC INTERACTION WITH DNAG</scope>
</reference>
<keyword id="KW-1185">Reference proteome</keyword>
<accession>P32690</accession>
<accession>Q2M6R6</accession>
<dbReference type="EMBL" id="U00006">
    <property type="protein sequence ID" value="AAC43132.1"/>
    <property type="molecule type" value="Genomic_DNA"/>
</dbReference>
<dbReference type="EMBL" id="U00096">
    <property type="status" value="NOT_ANNOTATED_CDS"/>
    <property type="molecule type" value="Genomic_DNA"/>
</dbReference>
<dbReference type="EMBL" id="AP009048">
    <property type="protein sequence ID" value="BAE78040.1"/>
    <property type="molecule type" value="Genomic_DNA"/>
</dbReference>
<dbReference type="EMBL" id="M96268">
    <property type="protein sequence ID" value="AAA17026.1"/>
    <property type="molecule type" value="Unassigned_DNA"/>
</dbReference>
<dbReference type="PIR" id="E65211">
    <property type="entry name" value="E65211"/>
</dbReference>
<dbReference type="SMR" id="P32690"/>
<dbReference type="BioGRID" id="4262665">
    <property type="interactions" value="12"/>
</dbReference>
<dbReference type="FunCoup" id="P32690">
    <property type="interactions" value="40"/>
</dbReference>
<dbReference type="IntAct" id="P32690">
    <property type="interactions" value="1"/>
</dbReference>
<dbReference type="KEGG" id="ecj:JW3998"/>
<dbReference type="KEGG" id="ecoc:C3026_21825"/>
<dbReference type="PATRIC" id="fig|1411691.4.peg.2670"/>
<dbReference type="EchoBASE" id="EB1871"/>
<dbReference type="eggNOG" id="COG1357">
    <property type="taxonomic scope" value="Bacteria"/>
</dbReference>
<dbReference type="HOGENOM" id="CLU_052150_0_0_6"/>
<dbReference type="InParanoid" id="P32690"/>
<dbReference type="OMA" id="HAINMFR"/>
<dbReference type="PhylomeDB" id="P32690"/>
<dbReference type="Proteomes" id="UP000000625">
    <property type="component" value="Chromosome"/>
</dbReference>
<dbReference type="Gene3D" id="2.160.20.80">
    <property type="entry name" value="E3 ubiquitin-protein ligase SopA"/>
    <property type="match status" value="1"/>
</dbReference>
<dbReference type="Gene3D" id="3.40.1850.10">
    <property type="entry name" value="HECT-like ubiquitin ligase"/>
    <property type="match status" value="1"/>
</dbReference>
<dbReference type="Gene3D" id="1.25.40.300">
    <property type="entry name" value="Putative secreted effector protein"/>
    <property type="match status" value="1"/>
</dbReference>
<dbReference type="InterPro" id="IPR001646">
    <property type="entry name" value="5peptide_repeat"/>
</dbReference>
<dbReference type="InterPro" id="IPR051082">
    <property type="entry name" value="Pentapeptide-BTB/POZ_domain"/>
</dbReference>
<dbReference type="InterPro" id="IPR025726">
    <property type="entry name" value="SopA-like_central"/>
</dbReference>
<dbReference type="NCBIfam" id="NF007264">
    <property type="entry name" value="PRK09718.1"/>
    <property type="match status" value="1"/>
</dbReference>
<dbReference type="PANTHER" id="PTHR14136">
    <property type="entry name" value="BTB_POZ DOMAIN-CONTAINING PROTEIN KCTD9"/>
    <property type="match status" value="1"/>
</dbReference>
<dbReference type="PANTHER" id="PTHR14136:SF17">
    <property type="entry name" value="BTB_POZ DOMAIN-CONTAINING PROTEIN KCTD9"/>
    <property type="match status" value="1"/>
</dbReference>
<dbReference type="Pfam" id="PF00805">
    <property type="entry name" value="Pentapeptide"/>
    <property type="match status" value="1"/>
</dbReference>
<dbReference type="Pfam" id="PF13981">
    <property type="entry name" value="SopA"/>
    <property type="match status" value="1"/>
</dbReference>
<dbReference type="SUPFAM" id="SSF141571">
    <property type="entry name" value="Pentapeptide repeat-like"/>
    <property type="match status" value="1"/>
</dbReference>
<comment type="miscellaneous">
    <text evidence="2">The sdgG mutation, which suppresses a conditional mutation in dnaG (DNA primase), has been localized to one of the ubiA, ubiC or yjbI genes.</text>
</comment>
<comment type="caution">
    <text evidence="1">Could be the product of a pseudogene, it is missing about 90 N-terminal residues compared to some paralogs.</text>
</comment>
<sequence length="442" mass="51708">MKKIECACNFLMDKDAQGYIDLSDLDLTSCHFKGDVISKVSFLSSNLQHVTFECKEIGDCNFTTAIVDNVIFRCRRLHNVIFIKASGECVDFSKNILDTVDFSQSQLGHSNFRECQIRNSNFDNCYLYASHFTRAEFLSAKEISFIKSNLTAVMFDYVRMSTGNFKDCITEQLELTIDYSDIFWNEDLDGYINNIIKMIDTLPDNAMILKSVLAVKLVMQLKILNIVNKNFIENMKKIFSHCPYIKDPIIRSYIHSDEDNKFDDFMRQHRFSEVNFDTQQMIDFINRFNTNKWLIDKNNNFFIQLIDQALRSTDDMIKANVWHLYKEWIRSDDVSPIFIETEDNLRTFNTNELTRNDNIFILFSSVDDGPVMVVSSQRLHDMLNPTKDTNWNSTYIYKSRHEMLPVNLTQETLFSSKSHGKYALFPIFTASWRAHRIMNKGV</sequence>
<evidence type="ECO:0000305" key="1"/>
<evidence type="ECO:0000305" key="2">
    <source>
    </source>
</evidence>
<feature type="chain" id="PRO_0000169711" description="Putative protein YjbI">
    <location>
        <begin position="1"/>
        <end position="442"/>
    </location>
</feature>
<protein>
    <recommendedName>
        <fullName>Putative protein YjbI</fullName>
    </recommendedName>
</protein>
<proteinExistence type="uncertain"/>
<gene>
    <name type="primary">yjbI</name>
    <name type="ordered locus">b4038</name>
    <name type="ordered locus">JW3998</name>
</gene>